<feature type="chain" id="PRO_0000106212" description="Valine--tRNA ligase">
    <location>
        <begin position="1"/>
        <end position="880"/>
    </location>
</feature>
<feature type="coiled-coil region" evidence="1">
    <location>
        <begin position="809"/>
        <end position="879"/>
    </location>
</feature>
<feature type="short sequence motif" description="'HIGH' region">
    <location>
        <begin position="49"/>
        <end position="59"/>
    </location>
</feature>
<feature type="short sequence motif" description="'KMSKS' region">
    <location>
        <begin position="525"/>
        <end position="529"/>
    </location>
</feature>
<feature type="binding site" evidence="1">
    <location>
        <position position="528"/>
    </location>
    <ligand>
        <name>ATP</name>
        <dbReference type="ChEBI" id="CHEBI:30616"/>
    </ligand>
</feature>
<sequence length="880" mass="102264">MTKQDQEMPTKYHPQDIESKWYEYWIEGKFFEATSDETKKPYTIVIPPPNVTGKLHLGHAWDTALQDILSRLKRMQGYDTLWLPGMDHAGIATQAKVEAKLREEGKSRYDLGREAFVEKTWEWKEEYADFIRQQWAKLGLSLDYSRERFTLDEGLSKAVREVFVKLYEKGLIYRGEYIINWDPVTKTALSDIEVIYKDVQGYFYHMKYPLADGDGAIEVATTRPETMLGDTAVAVHPEDERYQHLIGKMVKLPITGREIPIVADDYVDMEFGSGAVKITPAHDPNDFEIGNRHNLPRILVMNEDGTMNEKAGQYEGMDRFECRKQIVKDLQEQGVLFKIEEHVHSVGHSERSGAVVEPYLSTQWFVKMKPLAEQAIELQTTENKVNFVPDRFEKTYLRWMENIRDWCISRQLWWGHRIPAWYHKETGEVYVGHEAPQDIDNWKQDEDVLDTWFSSALWPFSTMGWPDEEAPDYKRYYSTDALVTGYDIIFFWVSRMIFQGLEFTGQPPFKDVLIHGLVRDAEGQKMSKSLGNGVDPMEVIDKYGADALRFFLATGSSPGNDLRFYWEKVESTWNFGNKIWNASRFALMNMDGMSYDEIDLTGEKSIADQWILTRLQETIETVTRLIDAYEFGEVGRHLYNFIWDDLCDWYIEMAKLPLYGEDEVAKKTTRSVLAYVLDQTMRLLHPLMPFITEEIWQHLPHEGESITVASWPVKSEEFTFEQAMGDMELLKDIIRSVRNTRAELNVPMSKEIELHIQAKNEDVLTQLERGKHYIEKFCNPSTLVMGTAIEKPEKSMSNVLSGVELYLPLAGLLDLEEEIARLEKEENKLEKEVERVQKKLSNQGFLAKAPEKVIEEERKKEADYLEKRAAVRARIKELKG</sequence>
<gene>
    <name evidence="1" type="primary">valS</name>
    <name type="ordered locus">BH3038</name>
</gene>
<evidence type="ECO:0000255" key="1">
    <source>
        <dbReference type="HAMAP-Rule" id="MF_02004"/>
    </source>
</evidence>
<protein>
    <recommendedName>
        <fullName evidence="1">Valine--tRNA ligase</fullName>
        <ecNumber evidence="1">6.1.1.9</ecNumber>
    </recommendedName>
    <alternativeName>
        <fullName evidence="1">Valyl-tRNA synthetase</fullName>
        <shortName evidence="1">ValRS</shortName>
    </alternativeName>
</protein>
<keyword id="KW-0030">Aminoacyl-tRNA synthetase</keyword>
<keyword id="KW-0067">ATP-binding</keyword>
<keyword id="KW-0175">Coiled coil</keyword>
<keyword id="KW-0963">Cytoplasm</keyword>
<keyword id="KW-0436">Ligase</keyword>
<keyword id="KW-0547">Nucleotide-binding</keyword>
<keyword id="KW-0648">Protein biosynthesis</keyword>
<keyword id="KW-1185">Reference proteome</keyword>
<comment type="function">
    <text evidence="1">Catalyzes the attachment of valine to tRNA(Val). As ValRS can inadvertently accommodate and process structurally similar amino acids such as threonine, to avoid such errors, it has a 'posttransfer' editing activity that hydrolyzes mischarged Thr-tRNA(Val) in a tRNA-dependent manner.</text>
</comment>
<comment type="catalytic activity">
    <reaction evidence="1">
        <text>tRNA(Val) + L-valine + ATP = L-valyl-tRNA(Val) + AMP + diphosphate</text>
        <dbReference type="Rhea" id="RHEA:10704"/>
        <dbReference type="Rhea" id="RHEA-COMP:9672"/>
        <dbReference type="Rhea" id="RHEA-COMP:9708"/>
        <dbReference type="ChEBI" id="CHEBI:30616"/>
        <dbReference type="ChEBI" id="CHEBI:33019"/>
        <dbReference type="ChEBI" id="CHEBI:57762"/>
        <dbReference type="ChEBI" id="CHEBI:78442"/>
        <dbReference type="ChEBI" id="CHEBI:78537"/>
        <dbReference type="ChEBI" id="CHEBI:456215"/>
        <dbReference type="EC" id="6.1.1.9"/>
    </reaction>
</comment>
<comment type="subunit">
    <text evidence="1">Monomer.</text>
</comment>
<comment type="subcellular location">
    <subcellularLocation>
        <location evidence="1">Cytoplasm</location>
    </subcellularLocation>
</comment>
<comment type="domain">
    <text evidence="1">ValRS has two distinct active sites: one for aminoacylation and one for editing. The misactivated threonine is translocated from the active site to the editing site.</text>
</comment>
<comment type="domain">
    <text evidence="1">The C-terminal coiled-coil domain is crucial for aminoacylation activity.</text>
</comment>
<comment type="similarity">
    <text evidence="1">Belongs to the class-I aminoacyl-tRNA synthetase family. ValS type 1 subfamily.</text>
</comment>
<dbReference type="EC" id="6.1.1.9" evidence="1"/>
<dbReference type="EMBL" id="BA000004">
    <property type="protein sequence ID" value="BAB06757.1"/>
    <property type="molecule type" value="Genomic_DNA"/>
</dbReference>
<dbReference type="PIR" id="F84029">
    <property type="entry name" value="F84029"/>
</dbReference>
<dbReference type="RefSeq" id="WP_010899182.1">
    <property type="nucleotide sequence ID" value="NC_002570.2"/>
</dbReference>
<dbReference type="SMR" id="Q9K8G8"/>
<dbReference type="STRING" id="272558.gene:10728948"/>
<dbReference type="KEGG" id="bha:BH3038"/>
<dbReference type="eggNOG" id="COG0525">
    <property type="taxonomic scope" value="Bacteria"/>
</dbReference>
<dbReference type="HOGENOM" id="CLU_001493_0_2_9"/>
<dbReference type="OrthoDB" id="9810365at2"/>
<dbReference type="Proteomes" id="UP000001258">
    <property type="component" value="Chromosome"/>
</dbReference>
<dbReference type="GO" id="GO:0005829">
    <property type="term" value="C:cytosol"/>
    <property type="evidence" value="ECO:0007669"/>
    <property type="project" value="TreeGrafter"/>
</dbReference>
<dbReference type="GO" id="GO:0002161">
    <property type="term" value="F:aminoacyl-tRNA deacylase activity"/>
    <property type="evidence" value="ECO:0007669"/>
    <property type="project" value="InterPro"/>
</dbReference>
<dbReference type="GO" id="GO:0005524">
    <property type="term" value="F:ATP binding"/>
    <property type="evidence" value="ECO:0007669"/>
    <property type="project" value="UniProtKB-UniRule"/>
</dbReference>
<dbReference type="GO" id="GO:0004832">
    <property type="term" value="F:valine-tRNA ligase activity"/>
    <property type="evidence" value="ECO:0007669"/>
    <property type="project" value="UniProtKB-UniRule"/>
</dbReference>
<dbReference type="GO" id="GO:0006438">
    <property type="term" value="P:valyl-tRNA aminoacylation"/>
    <property type="evidence" value="ECO:0007669"/>
    <property type="project" value="UniProtKB-UniRule"/>
</dbReference>
<dbReference type="CDD" id="cd07962">
    <property type="entry name" value="Anticodon_Ia_Val"/>
    <property type="match status" value="1"/>
</dbReference>
<dbReference type="CDD" id="cd00817">
    <property type="entry name" value="ValRS_core"/>
    <property type="match status" value="1"/>
</dbReference>
<dbReference type="FunFam" id="1.10.287.380:FF:000001">
    <property type="entry name" value="Valine--tRNA ligase"/>
    <property type="match status" value="1"/>
</dbReference>
<dbReference type="FunFam" id="1.10.730.10:FF:000014">
    <property type="entry name" value="Valine--tRNA ligase"/>
    <property type="match status" value="1"/>
</dbReference>
<dbReference type="FunFam" id="3.40.50.620:FF:000032">
    <property type="entry name" value="Valine--tRNA ligase"/>
    <property type="match status" value="1"/>
</dbReference>
<dbReference type="FunFam" id="3.40.50.620:FF:000098">
    <property type="entry name" value="Valine--tRNA ligase"/>
    <property type="match status" value="1"/>
</dbReference>
<dbReference type="FunFam" id="3.90.740.10:FF:000005">
    <property type="entry name" value="Valine--tRNA ligase, mitochondrial"/>
    <property type="match status" value="1"/>
</dbReference>
<dbReference type="Gene3D" id="3.40.50.620">
    <property type="entry name" value="HUPs"/>
    <property type="match status" value="3"/>
</dbReference>
<dbReference type="Gene3D" id="1.10.730.10">
    <property type="entry name" value="Isoleucyl-tRNA Synthetase, Domain 1"/>
    <property type="match status" value="1"/>
</dbReference>
<dbReference type="Gene3D" id="1.10.287.380">
    <property type="entry name" value="Valyl-tRNA synthetase, C-terminal domain"/>
    <property type="match status" value="1"/>
</dbReference>
<dbReference type="Gene3D" id="3.90.740.10">
    <property type="entry name" value="Valyl/Leucyl/Isoleucyl-tRNA synthetase, editing domain"/>
    <property type="match status" value="1"/>
</dbReference>
<dbReference type="HAMAP" id="MF_02004">
    <property type="entry name" value="Val_tRNA_synth_type1"/>
    <property type="match status" value="1"/>
</dbReference>
<dbReference type="InterPro" id="IPR001412">
    <property type="entry name" value="aa-tRNA-synth_I_CS"/>
</dbReference>
<dbReference type="InterPro" id="IPR002300">
    <property type="entry name" value="aa-tRNA-synth_Ia"/>
</dbReference>
<dbReference type="InterPro" id="IPR033705">
    <property type="entry name" value="Anticodon_Ia_Val"/>
</dbReference>
<dbReference type="InterPro" id="IPR013155">
    <property type="entry name" value="M/V/L/I-tRNA-synth_anticd-bd"/>
</dbReference>
<dbReference type="InterPro" id="IPR014729">
    <property type="entry name" value="Rossmann-like_a/b/a_fold"/>
</dbReference>
<dbReference type="InterPro" id="IPR010978">
    <property type="entry name" value="tRNA-bd_arm"/>
</dbReference>
<dbReference type="InterPro" id="IPR009080">
    <property type="entry name" value="tRNAsynth_Ia_anticodon-bd"/>
</dbReference>
<dbReference type="InterPro" id="IPR037118">
    <property type="entry name" value="Val-tRNA_synth_C_sf"/>
</dbReference>
<dbReference type="InterPro" id="IPR019499">
    <property type="entry name" value="Val-tRNA_synth_tRNA-bd"/>
</dbReference>
<dbReference type="InterPro" id="IPR009008">
    <property type="entry name" value="Val/Leu/Ile-tRNA-synth_edit"/>
</dbReference>
<dbReference type="InterPro" id="IPR002303">
    <property type="entry name" value="Valyl-tRNA_ligase"/>
</dbReference>
<dbReference type="NCBIfam" id="NF004349">
    <property type="entry name" value="PRK05729.1"/>
    <property type="match status" value="1"/>
</dbReference>
<dbReference type="NCBIfam" id="TIGR00422">
    <property type="entry name" value="valS"/>
    <property type="match status" value="1"/>
</dbReference>
<dbReference type="PANTHER" id="PTHR11946:SF93">
    <property type="entry name" value="VALINE--TRNA LIGASE, CHLOROPLASTIC_MITOCHONDRIAL 2"/>
    <property type="match status" value="1"/>
</dbReference>
<dbReference type="PANTHER" id="PTHR11946">
    <property type="entry name" value="VALYL-TRNA SYNTHETASES"/>
    <property type="match status" value="1"/>
</dbReference>
<dbReference type="Pfam" id="PF08264">
    <property type="entry name" value="Anticodon_1"/>
    <property type="match status" value="1"/>
</dbReference>
<dbReference type="Pfam" id="PF00133">
    <property type="entry name" value="tRNA-synt_1"/>
    <property type="match status" value="1"/>
</dbReference>
<dbReference type="Pfam" id="PF10458">
    <property type="entry name" value="Val_tRNA-synt_C"/>
    <property type="match status" value="1"/>
</dbReference>
<dbReference type="PRINTS" id="PR00986">
    <property type="entry name" value="TRNASYNTHVAL"/>
</dbReference>
<dbReference type="SUPFAM" id="SSF47323">
    <property type="entry name" value="Anticodon-binding domain of a subclass of class I aminoacyl-tRNA synthetases"/>
    <property type="match status" value="1"/>
</dbReference>
<dbReference type="SUPFAM" id="SSF52374">
    <property type="entry name" value="Nucleotidylyl transferase"/>
    <property type="match status" value="1"/>
</dbReference>
<dbReference type="SUPFAM" id="SSF46589">
    <property type="entry name" value="tRNA-binding arm"/>
    <property type="match status" value="1"/>
</dbReference>
<dbReference type="SUPFAM" id="SSF50677">
    <property type="entry name" value="ValRS/IleRS/LeuRS editing domain"/>
    <property type="match status" value="1"/>
</dbReference>
<dbReference type="PROSITE" id="PS00178">
    <property type="entry name" value="AA_TRNA_LIGASE_I"/>
    <property type="match status" value="1"/>
</dbReference>
<proteinExistence type="inferred from homology"/>
<accession>Q9K8G8</accession>
<organism>
    <name type="scientific">Halalkalibacterium halodurans (strain ATCC BAA-125 / DSM 18197 / FERM 7344 / JCM 9153 / C-125)</name>
    <name type="common">Bacillus halodurans</name>
    <dbReference type="NCBI Taxonomy" id="272558"/>
    <lineage>
        <taxon>Bacteria</taxon>
        <taxon>Bacillati</taxon>
        <taxon>Bacillota</taxon>
        <taxon>Bacilli</taxon>
        <taxon>Bacillales</taxon>
        <taxon>Bacillaceae</taxon>
        <taxon>Halalkalibacterium (ex Joshi et al. 2022)</taxon>
    </lineage>
</organism>
<reference key="1">
    <citation type="journal article" date="2000" name="Nucleic Acids Res.">
        <title>Complete genome sequence of the alkaliphilic bacterium Bacillus halodurans and genomic sequence comparison with Bacillus subtilis.</title>
        <authorList>
            <person name="Takami H."/>
            <person name="Nakasone K."/>
            <person name="Takaki Y."/>
            <person name="Maeno G."/>
            <person name="Sasaki R."/>
            <person name="Masui N."/>
            <person name="Fuji F."/>
            <person name="Hirama C."/>
            <person name="Nakamura Y."/>
            <person name="Ogasawara N."/>
            <person name="Kuhara S."/>
            <person name="Horikoshi K."/>
        </authorList>
    </citation>
    <scope>NUCLEOTIDE SEQUENCE [LARGE SCALE GENOMIC DNA]</scope>
    <source>
        <strain>ATCC BAA-125 / DSM 18197 / FERM 7344 / JCM 9153 / C-125</strain>
    </source>
</reference>
<name>SYV_HALH5</name>